<reference key="1">
    <citation type="journal article" date="2000" name="Proc. Natl. Acad. Sci. U.S.A.">
        <title>Genome sequence of Halobacterium species NRC-1.</title>
        <authorList>
            <person name="Ng W.V."/>
            <person name="Kennedy S.P."/>
            <person name="Mahairas G.G."/>
            <person name="Berquist B."/>
            <person name="Pan M."/>
            <person name="Shukla H.D."/>
            <person name="Lasky S.R."/>
            <person name="Baliga N.S."/>
            <person name="Thorsson V."/>
            <person name="Sbrogna J."/>
            <person name="Swartzell S."/>
            <person name="Weir D."/>
            <person name="Hall J."/>
            <person name="Dahl T.A."/>
            <person name="Welti R."/>
            <person name="Goo Y.A."/>
            <person name="Leithauser B."/>
            <person name="Keller K."/>
            <person name="Cruz R."/>
            <person name="Danson M.J."/>
            <person name="Hough D.W."/>
            <person name="Maddocks D.G."/>
            <person name="Jablonski P.E."/>
            <person name="Krebs M.P."/>
            <person name="Angevine C.M."/>
            <person name="Dale H."/>
            <person name="Isenbarger T.A."/>
            <person name="Peck R.F."/>
            <person name="Pohlschroder M."/>
            <person name="Spudich J.L."/>
            <person name="Jung K.-H."/>
            <person name="Alam M."/>
            <person name="Freitas T."/>
            <person name="Hou S."/>
            <person name="Daniels C.J."/>
            <person name="Dennis P.P."/>
            <person name="Omer A.D."/>
            <person name="Ebhardt H."/>
            <person name="Lowe T.M."/>
            <person name="Liang P."/>
            <person name="Riley M."/>
            <person name="Hood L."/>
            <person name="DasSarma S."/>
        </authorList>
    </citation>
    <scope>NUCLEOTIDE SEQUENCE [LARGE SCALE GENOMIC DNA]</scope>
    <source>
        <strain>ATCC 700922 / JCM 11081 / NRC-1</strain>
    </source>
</reference>
<reference key="2">
    <citation type="journal article" date="2019" name="Microbiol. Resour. Announc.">
        <title>The Genome Sequence of the Halobacterium salinarum Type Strain Is Closely Related to That of Laboratory Strains NRC-1 and R1.</title>
        <authorList>
            <person name="Pfeiffer F."/>
            <person name="Marchfelder A."/>
            <person name="Habermann B."/>
            <person name="Dyall-Smith M.L."/>
        </authorList>
    </citation>
    <scope>GENOME REANNOTATION</scope>
    <source>
        <strain>ATCC 700922 / JCM 11081 / NRC-1</strain>
    </source>
</reference>
<reference key="3">
    <citation type="journal article" date="2022" name="Commun. Biol.">
        <title>A non-carboxylating pentose bisphosphate pathway in halophilic archaea.</title>
        <authorList>
            <person name="Sato T."/>
            <person name="Utashima S.H."/>
            <person name="Yoshii Y."/>
            <person name="Hirata K."/>
            <person name="Kanda S."/>
            <person name="Onoda Y."/>
            <person name="Jin J.Q."/>
            <person name="Xiao S."/>
            <person name="Minami R."/>
            <person name="Fukushima H."/>
            <person name="Noguchi A."/>
            <person name="Manabe Y."/>
            <person name="Fukase K."/>
            <person name="Atomi H."/>
        </authorList>
    </citation>
    <scope>FUNCTION</scope>
    <scope>CATALYTIC ACTIVITY</scope>
    <scope>ACTIVITY REGULATION</scope>
    <scope>BIOPHYSICOCHEMICAL PROPERTIES</scope>
</reference>
<comment type="function">
    <text evidence="2">Oxidoreductase involved in the non-carboxylating pentose bisphosphate pathway, a nucleoside degradation pathway present in some halophilic archaea (PubMed:36434094). Catalyzes the reduction of glycolaldehyde to ethylene glycol (PubMed:36434094). Cannot catalyze the oxidation of glycerol 1-phosphate nor the reduction of dihydroxyacetone phosphate (DHAP) (PubMed:36434094).</text>
</comment>
<comment type="catalytic activity">
    <reaction evidence="2">
        <text>ethylene glycol + NAD(+) = glycolaldehyde + NADH + H(+)</text>
        <dbReference type="Rhea" id="RHEA:27630"/>
        <dbReference type="ChEBI" id="CHEBI:15378"/>
        <dbReference type="ChEBI" id="CHEBI:17071"/>
        <dbReference type="ChEBI" id="CHEBI:30742"/>
        <dbReference type="ChEBI" id="CHEBI:57540"/>
        <dbReference type="ChEBI" id="CHEBI:57945"/>
    </reaction>
    <physiologicalReaction direction="right-to-left" evidence="2">
        <dbReference type="Rhea" id="RHEA:27632"/>
    </physiologicalReaction>
</comment>
<comment type="cofactor">
    <cofactor evidence="1">
        <name>Zn(2+)</name>
        <dbReference type="ChEBI" id="CHEBI:29105"/>
    </cofactor>
    <text evidence="1">Binds 1 zinc ion per subunit.</text>
</comment>
<comment type="activity regulation">
    <text evidence="2">Is subject to substrate inhibition.</text>
</comment>
<comment type="biophysicochemical properties">
    <kinetics>
        <Vmax evidence="2">33.0 umol/min/mg enzyme</Vmax>
    </kinetics>
    <phDependence>
        <text evidence="2">Optimum pH is around 6.</text>
    </phDependence>
    <temperatureDependence>
        <text evidence="2">Optimum temperature is 40 degrees Celsius.</text>
    </temperatureDependence>
</comment>
<comment type="similarity">
    <text evidence="4">Belongs to the iron-containing alcohol dehydrogenase family.</text>
</comment>
<proteinExistence type="evidence at protein level"/>
<feature type="chain" id="PRO_0000459717" description="Glycolaldehyde reductase">
    <location>
        <begin position="1"/>
        <end position="365"/>
    </location>
</feature>
<feature type="binding site" evidence="1">
    <location>
        <position position="37"/>
    </location>
    <ligand>
        <name>NAD(+)</name>
        <dbReference type="ChEBI" id="CHEBI:57540"/>
    </ligand>
</feature>
<feature type="binding site" evidence="1">
    <location>
        <position position="94"/>
    </location>
    <ligand>
        <name>NAD(+)</name>
        <dbReference type="ChEBI" id="CHEBI:57540"/>
    </ligand>
</feature>
<feature type="binding site" evidence="1">
    <location>
        <position position="95"/>
    </location>
    <ligand>
        <name>NAD(+)</name>
        <dbReference type="ChEBI" id="CHEBI:57540"/>
    </ligand>
</feature>
<feature type="binding site" evidence="1">
    <location>
        <position position="116"/>
    </location>
    <ligand>
        <name>NAD(+)</name>
        <dbReference type="ChEBI" id="CHEBI:57540"/>
    </ligand>
</feature>
<feature type="binding site" evidence="1">
    <location>
        <position position="119"/>
    </location>
    <ligand>
        <name>NAD(+)</name>
        <dbReference type="ChEBI" id="CHEBI:57540"/>
    </ligand>
</feature>
<feature type="binding site" evidence="1">
    <location>
        <position position="125"/>
    </location>
    <ligand>
        <name>NAD(+)</name>
        <dbReference type="ChEBI" id="CHEBI:57540"/>
    </ligand>
</feature>
<feature type="binding site" evidence="1">
    <location>
        <position position="127"/>
    </location>
    <ligand>
        <name>NAD(+)</name>
        <dbReference type="ChEBI" id="CHEBI:57540"/>
    </ligand>
</feature>
<feature type="binding site" evidence="1">
    <location>
        <position position="131"/>
    </location>
    <ligand>
        <name>NAD(+)</name>
        <dbReference type="ChEBI" id="CHEBI:57540"/>
    </ligand>
</feature>
<feature type="binding site" evidence="1">
    <location>
        <position position="171"/>
    </location>
    <ligand>
        <name>Zn(2+)</name>
        <dbReference type="ChEBI" id="CHEBI:29105"/>
        <note>catalytic</note>
    </ligand>
</feature>
<feature type="binding site" evidence="1">
    <location>
        <position position="254"/>
    </location>
    <ligand>
        <name>Zn(2+)</name>
        <dbReference type="ChEBI" id="CHEBI:29105"/>
        <note>catalytic</note>
    </ligand>
</feature>
<feature type="binding site" evidence="1">
    <location>
        <position position="271"/>
    </location>
    <ligand>
        <name>Zn(2+)</name>
        <dbReference type="ChEBI" id="CHEBI:29105"/>
        <note>catalytic</note>
    </ligand>
</feature>
<evidence type="ECO:0000250" key="1">
    <source>
        <dbReference type="UniProtKB" id="P32816"/>
    </source>
</evidence>
<evidence type="ECO:0000269" key="2">
    <source>
    </source>
</evidence>
<evidence type="ECO:0000303" key="3">
    <source>
    </source>
</evidence>
<evidence type="ECO:0000305" key="4"/>
<evidence type="ECO:0000312" key="5">
    <source>
        <dbReference type="EMBL" id="AAG20914.1"/>
    </source>
</evidence>
<evidence type="ECO:0000312" key="6">
    <source>
        <dbReference type="Proteomes" id="UP000000554"/>
    </source>
</evidence>
<accession>Q9HHR2</accession>
<geneLocation type="plasmid" evidence="6">
    <name>pNRC200</name>
</geneLocation>
<sequence>MTSVFKSPSTYVQGRNVTTDIGTHAESLGDTALLVADEIVMDMIESDVHESLAEAGLDGSSVVFNGESSEDEIERIASVAVDEGADIVIGAGGGKALDTAKAVREEVGGAMVSMPTIASMDAPTSSLSVIYSEHGEFEDYWYYEQHPDLVIVDTEVVAAAPARFLRSGIADGLATWFEADAVAQSGGDNEVGGKPTRAGHKLAELCYETLREHGAGALDAVEHDAVTESVDAVIEANTLLSGLGFESGGLAAAHSVHNGLTQLAETHDATHGEKVNIGTITQLVLEGHSDARIEEFIEFSVELGLPVTLGEIGITNPEQVDLDVVAEAACDEAETIHDEPFDVTPAMVRDALLTADEMGRRVRDR</sequence>
<keyword id="KW-0479">Metal-binding</keyword>
<keyword id="KW-0520">NAD</keyword>
<keyword id="KW-0560">Oxidoreductase</keyword>
<keyword id="KW-0614">Plasmid</keyword>
<keyword id="KW-1185">Reference proteome</keyword>
<keyword id="KW-0862">Zinc</keyword>
<protein>
    <recommendedName>
        <fullName evidence="3">Glycolaldehyde reductase</fullName>
        <shortName evidence="3">GaR</shortName>
        <ecNumber evidence="2">1.1.1.-</ecNumber>
    </recommendedName>
</protein>
<dbReference type="EC" id="1.1.1.-" evidence="2"/>
<dbReference type="EMBL" id="AE004438">
    <property type="protein sequence ID" value="AAG20914.1"/>
    <property type="molecule type" value="Genomic_DNA"/>
</dbReference>
<dbReference type="EMBL" id="BK010831">
    <property type="protein sequence ID" value="DAC79879.1"/>
    <property type="molecule type" value="Genomic_DNA"/>
</dbReference>
<dbReference type="RefSeq" id="WP_010904127.1">
    <property type="nucleotide sequence ID" value="NZ_BK010831.1"/>
</dbReference>
<dbReference type="SMR" id="Q9HHR2"/>
<dbReference type="KEGG" id="hal:VNG_6270G"/>
<dbReference type="PATRIC" id="fig|64091.14.peg.2261"/>
<dbReference type="HOGENOM" id="CLU_044754_1_0_2"/>
<dbReference type="OrthoDB" id="116813at2157"/>
<dbReference type="BioCyc" id="MetaCyc:MONOMER-124396"/>
<dbReference type="Proteomes" id="UP000000554">
    <property type="component" value="Plasmid pNRC200"/>
</dbReference>
<dbReference type="GO" id="GO:0008888">
    <property type="term" value="F:glycerol dehydrogenase (NAD+) activity"/>
    <property type="evidence" value="ECO:0007669"/>
    <property type="project" value="UniProtKB-EC"/>
</dbReference>
<dbReference type="GO" id="GO:0046872">
    <property type="term" value="F:metal ion binding"/>
    <property type="evidence" value="ECO:0007669"/>
    <property type="project" value="UniProtKB-KW"/>
</dbReference>
<dbReference type="CDD" id="cd08170">
    <property type="entry name" value="GlyDH"/>
    <property type="match status" value="1"/>
</dbReference>
<dbReference type="Gene3D" id="3.40.50.1970">
    <property type="match status" value="1"/>
</dbReference>
<dbReference type="Gene3D" id="1.20.1090.10">
    <property type="entry name" value="Dehydroquinate synthase-like - alpha domain"/>
    <property type="match status" value="1"/>
</dbReference>
<dbReference type="InterPro" id="IPR001670">
    <property type="entry name" value="ADH_Fe/GldA"/>
</dbReference>
<dbReference type="InterPro" id="IPR018211">
    <property type="entry name" value="ADH_Fe_CS"/>
</dbReference>
<dbReference type="InterPro" id="IPR016205">
    <property type="entry name" value="Glycerol_DH"/>
</dbReference>
<dbReference type="NCBIfam" id="NF006941">
    <property type="entry name" value="PRK09423.1"/>
    <property type="match status" value="1"/>
</dbReference>
<dbReference type="PANTHER" id="PTHR43616">
    <property type="entry name" value="GLYCEROL DEHYDROGENASE"/>
    <property type="match status" value="1"/>
</dbReference>
<dbReference type="PANTHER" id="PTHR43616:SF5">
    <property type="entry name" value="GLYCEROL DEHYDROGENASE 1"/>
    <property type="match status" value="1"/>
</dbReference>
<dbReference type="Pfam" id="PF00465">
    <property type="entry name" value="Fe-ADH"/>
    <property type="match status" value="1"/>
</dbReference>
<dbReference type="PIRSF" id="PIRSF000112">
    <property type="entry name" value="Glycerol_dehydrogenase"/>
    <property type="match status" value="1"/>
</dbReference>
<dbReference type="SUPFAM" id="SSF56796">
    <property type="entry name" value="Dehydroquinate synthase-like"/>
    <property type="match status" value="1"/>
</dbReference>
<dbReference type="PROSITE" id="PS00060">
    <property type="entry name" value="ADH_IRON_2"/>
    <property type="match status" value="1"/>
</dbReference>
<name>GLYAR_HALSA</name>
<gene>
    <name evidence="5" type="ordered locus">VNG_6270G</name>
</gene>
<organism>
    <name type="scientific">Halobacterium salinarum (strain ATCC 700922 / JCM 11081 / NRC-1)</name>
    <name type="common">Halobacterium halobium</name>
    <dbReference type="NCBI Taxonomy" id="64091"/>
    <lineage>
        <taxon>Archaea</taxon>
        <taxon>Methanobacteriati</taxon>
        <taxon>Methanobacteriota</taxon>
        <taxon>Stenosarchaea group</taxon>
        <taxon>Halobacteria</taxon>
        <taxon>Halobacteriales</taxon>
        <taxon>Halobacteriaceae</taxon>
        <taxon>Halobacterium</taxon>
        <taxon>Halobacterium salinarum NRC-34001</taxon>
    </lineage>
</organism>